<sequence>MPGQKIRIRLRAYDHRLLDESAKKIVEVAKQTNAKVSGPIPLPTERSLYVVLRSPLKHKDSREQFEKKVHKRLIDIIEPNSKTIDALMKINLPAGVDVEINL</sequence>
<protein>
    <recommendedName>
        <fullName evidence="1">Small ribosomal subunit protein uS10</fullName>
    </recommendedName>
    <alternativeName>
        <fullName evidence="2">30S ribosomal protein S10</fullName>
    </alternativeName>
</protein>
<name>RS10_FERNB</name>
<proteinExistence type="inferred from homology"/>
<accession>A7HM53</accession>
<reference key="1">
    <citation type="submission" date="2007-07" db="EMBL/GenBank/DDBJ databases">
        <title>Complete sequence of Fervidobacterium nodosum Rt17-B1.</title>
        <authorList>
            <consortium name="US DOE Joint Genome Institute"/>
            <person name="Copeland A."/>
            <person name="Lucas S."/>
            <person name="Lapidus A."/>
            <person name="Barry K."/>
            <person name="Glavina del Rio T."/>
            <person name="Dalin E."/>
            <person name="Tice H."/>
            <person name="Pitluck S."/>
            <person name="Saunders E."/>
            <person name="Brettin T."/>
            <person name="Bruce D."/>
            <person name="Detter J.C."/>
            <person name="Han C."/>
            <person name="Schmutz J."/>
            <person name="Larimer F."/>
            <person name="Land M."/>
            <person name="Hauser L."/>
            <person name="Kyrpides N."/>
            <person name="Mikhailova N."/>
            <person name="Nelson K."/>
            <person name="Gogarten J.P."/>
            <person name="Noll K."/>
            <person name="Richardson P."/>
        </authorList>
    </citation>
    <scope>NUCLEOTIDE SEQUENCE [LARGE SCALE GENOMIC DNA]</scope>
    <source>
        <strain>ATCC 35602 / DSM 5306 / Rt17-B1</strain>
    </source>
</reference>
<feature type="chain" id="PRO_1000072462" description="Small ribosomal subunit protein uS10">
    <location>
        <begin position="1"/>
        <end position="102"/>
    </location>
</feature>
<comment type="function">
    <text evidence="1">Involved in the binding of tRNA to the ribosomes.</text>
</comment>
<comment type="subunit">
    <text evidence="1">Part of the 30S ribosomal subunit.</text>
</comment>
<comment type="similarity">
    <text evidence="1">Belongs to the universal ribosomal protein uS10 family.</text>
</comment>
<dbReference type="EMBL" id="CP000771">
    <property type="protein sequence ID" value="ABS60986.1"/>
    <property type="molecule type" value="Genomic_DNA"/>
</dbReference>
<dbReference type="RefSeq" id="WP_011994299.1">
    <property type="nucleotide sequence ID" value="NC_009718.1"/>
</dbReference>
<dbReference type="SMR" id="A7HM53"/>
<dbReference type="STRING" id="381764.Fnod_1139"/>
<dbReference type="KEGG" id="fno:Fnod_1139"/>
<dbReference type="eggNOG" id="COG0051">
    <property type="taxonomic scope" value="Bacteria"/>
</dbReference>
<dbReference type="HOGENOM" id="CLU_122625_1_3_0"/>
<dbReference type="OrthoDB" id="9804464at2"/>
<dbReference type="Proteomes" id="UP000002415">
    <property type="component" value="Chromosome"/>
</dbReference>
<dbReference type="GO" id="GO:1990904">
    <property type="term" value="C:ribonucleoprotein complex"/>
    <property type="evidence" value="ECO:0007669"/>
    <property type="project" value="UniProtKB-KW"/>
</dbReference>
<dbReference type="GO" id="GO:0005840">
    <property type="term" value="C:ribosome"/>
    <property type="evidence" value="ECO:0007669"/>
    <property type="project" value="UniProtKB-KW"/>
</dbReference>
<dbReference type="GO" id="GO:0003735">
    <property type="term" value="F:structural constituent of ribosome"/>
    <property type="evidence" value="ECO:0007669"/>
    <property type="project" value="InterPro"/>
</dbReference>
<dbReference type="GO" id="GO:0000049">
    <property type="term" value="F:tRNA binding"/>
    <property type="evidence" value="ECO:0007669"/>
    <property type="project" value="UniProtKB-UniRule"/>
</dbReference>
<dbReference type="GO" id="GO:0006412">
    <property type="term" value="P:translation"/>
    <property type="evidence" value="ECO:0007669"/>
    <property type="project" value="UniProtKB-UniRule"/>
</dbReference>
<dbReference type="FunFam" id="3.30.70.600:FF:000001">
    <property type="entry name" value="30S ribosomal protein S10"/>
    <property type="match status" value="1"/>
</dbReference>
<dbReference type="Gene3D" id="3.30.70.600">
    <property type="entry name" value="Ribosomal protein S10 domain"/>
    <property type="match status" value="1"/>
</dbReference>
<dbReference type="HAMAP" id="MF_00508">
    <property type="entry name" value="Ribosomal_uS10"/>
    <property type="match status" value="1"/>
</dbReference>
<dbReference type="InterPro" id="IPR001848">
    <property type="entry name" value="Ribosomal_uS10"/>
</dbReference>
<dbReference type="InterPro" id="IPR018268">
    <property type="entry name" value="Ribosomal_uS10_CS"/>
</dbReference>
<dbReference type="InterPro" id="IPR027486">
    <property type="entry name" value="Ribosomal_uS10_dom"/>
</dbReference>
<dbReference type="InterPro" id="IPR036838">
    <property type="entry name" value="Ribosomal_uS10_dom_sf"/>
</dbReference>
<dbReference type="NCBIfam" id="NF001861">
    <property type="entry name" value="PRK00596.1"/>
    <property type="match status" value="1"/>
</dbReference>
<dbReference type="NCBIfam" id="TIGR01049">
    <property type="entry name" value="rpsJ_bact"/>
    <property type="match status" value="1"/>
</dbReference>
<dbReference type="PANTHER" id="PTHR11700">
    <property type="entry name" value="30S RIBOSOMAL PROTEIN S10 FAMILY MEMBER"/>
    <property type="match status" value="1"/>
</dbReference>
<dbReference type="Pfam" id="PF00338">
    <property type="entry name" value="Ribosomal_S10"/>
    <property type="match status" value="1"/>
</dbReference>
<dbReference type="PRINTS" id="PR00971">
    <property type="entry name" value="RIBOSOMALS10"/>
</dbReference>
<dbReference type="SMART" id="SM01403">
    <property type="entry name" value="Ribosomal_S10"/>
    <property type="match status" value="1"/>
</dbReference>
<dbReference type="SUPFAM" id="SSF54999">
    <property type="entry name" value="Ribosomal protein S10"/>
    <property type="match status" value="1"/>
</dbReference>
<dbReference type="PROSITE" id="PS00361">
    <property type="entry name" value="RIBOSOMAL_S10"/>
    <property type="match status" value="1"/>
</dbReference>
<organism>
    <name type="scientific">Fervidobacterium nodosum (strain ATCC 35602 / DSM 5306 / Rt17-B1)</name>
    <dbReference type="NCBI Taxonomy" id="381764"/>
    <lineage>
        <taxon>Bacteria</taxon>
        <taxon>Thermotogati</taxon>
        <taxon>Thermotogota</taxon>
        <taxon>Thermotogae</taxon>
        <taxon>Thermotogales</taxon>
        <taxon>Fervidobacteriaceae</taxon>
        <taxon>Fervidobacterium</taxon>
    </lineage>
</organism>
<keyword id="KW-1185">Reference proteome</keyword>
<keyword id="KW-0687">Ribonucleoprotein</keyword>
<keyword id="KW-0689">Ribosomal protein</keyword>
<gene>
    <name evidence="1" type="primary">rpsJ</name>
    <name type="ordered locus">Fnod_1139</name>
</gene>
<evidence type="ECO:0000255" key="1">
    <source>
        <dbReference type="HAMAP-Rule" id="MF_00508"/>
    </source>
</evidence>
<evidence type="ECO:0000305" key="2"/>